<reference key="1">
    <citation type="journal article" date="2007" name="Appl. Environ. Microbiol.">
        <title>Genome sequence of the cellulolytic gliding bacterium Cytophaga hutchinsonii.</title>
        <authorList>
            <person name="Xie G."/>
            <person name="Bruce D.C."/>
            <person name="Challacombe J.F."/>
            <person name="Chertkov O."/>
            <person name="Detter J.C."/>
            <person name="Gilna P."/>
            <person name="Han C.S."/>
            <person name="Lucas S."/>
            <person name="Misra M."/>
            <person name="Myers G.L."/>
            <person name="Richardson P."/>
            <person name="Tapia R."/>
            <person name="Thayer N."/>
            <person name="Thompson L.S."/>
            <person name="Brettin T.S."/>
            <person name="Henrissat B."/>
            <person name="Wilson D.B."/>
            <person name="McBride M.J."/>
        </authorList>
    </citation>
    <scope>NUCLEOTIDE SEQUENCE [LARGE SCALE GENOMIC DNA]</scope>
    <source>
        <strain>ATCC 33406 / DSM 1761 / JCM 20678 / CIP 103989 / IAM 12607 / NBRC 15051 / NCIMB 9469 / D465</strain>
    </source>
</reference>
<accession>Q11YY5</accession>
<comment type="function">
    <text evidence="1">Catalyzes the conversion of 1-hydroxy-2-methyl-2-(E)-butenyl 4-diphosphate (HMBPP) into a mixture of isopentenyl diphosphate (IPP) and dimethylallyl diphosphate (DMAPP). Acts in the terminal step of the DOXP/MEP pathway for isoprenoid precursor biosynthesis.</text>
</comment>
<comment type="catalytic activity">
    <reaction evidence="1">
        <text>isopentenyl diphosphate + 2 oxidized [2Fe-2S]-[ferredoxin] + H2O = (2E)-4-hydroxy-3-methylbut-2-enyl diphosphate + 2 reduced [2Fe-2S]-[ferredoxin] + 2 H(+)</text>
        <dbReference type="Rhea" id="RHEA:24488"/>
        <dbReference type="Rhea" id="RHEA-COMP:10000"/>
        <dbReference type="Rhea" id="RHEA-COMP:10001"/>
        <dbReference type="ChEBI" id="CHEBI:15377"/>
        <dbReference type="ChEBI" id="CHEBI:15378"/>
        <dbReference type="ChEBI" id="CHEBI:33737"/>
        <dbReference type="ChEBI" id="CHEBI:33738"/>
        <dbReference type="ChEBI" id="CHEBI:128753"/>
        <dbReference type="ChEBI" id="CHEBI:128769"/>
        <dbReference type="EC" id="1.17.7.4"/>
    </reaction>
</comment>
<comment type="catalytic activity">
    <reaction evidence="1">
        <text>dimethylallyl diphosphate + 2 oxidized [2Fe-2S]-[ferredoxin] + H2O = (2E)-4-hydroxy-3-methylbut-2-enyl diphosphate + 2 reduced [2Fe-2S]-[ferredoxin] + 2 H(+)</text>
        <dbReference type="Rhea" id="RHEA:24825"/>
        <dbReference type="Rhea" id="RHEA-COMP:10000"/>
        <dbReference type="Rhea" id="RHEA-COMP:10001"/>
        <dbReference type="ChEBI" id="CHEBI:15377"/>
        <dbReference type="ChEBI" id="CHEBI:15378"/>
        <dbReference type="ChEBI" id="CHEBI:33737"/>
        <dbReference type="ChEBI" id="CHEBI:33738"/>
        <dbReference type="ChEBI" id="CHEBI:57623"/>
        <dbReference type="ChEBI" id="CHEBI:128753"/>
        <dbReference type="EC" id="1.17.7.4"/>
    </reaction>
</comment>
<comment type="cofactor">
    <cofactor evidence="1">
        <name>[4Fe-4S] cluster</name>
        <dbReference type="ChEBI" id="CHEBI:49883"/>
    </cofactor>
    <text evidence="1">Binds 1 [4Fe-4S] cluster per subunit.</text>
</comment>
<comment type="pathway">
    <text evidence="1">Isoprenoid biosynthesis; dimethylallyl diphosphate biosynthesis; dimethylallyl diphosphate from (2E)-4-hydroxy-3-methylbutenyl diphosphate: step 1/1.</text>
</comment>
<comment type="pathway">
    <text evidence="1">Isoprenoid biosynthesis; isopentenyl diphosphate biosynthesis via DXP pathway; isopentenyl diphosphate from 1-deoxy-D-xylulose 5-phosphate: step 6/6.</text>
</comment>
<comment type="similarity">
    <text evidence="1">Belongs to the IspH family.</text>
</comment>
<gene>
    <name evidence="1" type="primary">ispH</name>
    <name type="ordered locus">CHU_0087</name>
</gene>
<evidence type="ECO:0000255" key="1">
    <source>
        <dbReference type="HAMAP-Rule" id="MF_00191"/>
    </source>
</evidence>
<proteinExistence type="inferred from homology"/>
<sequence length="293" mass="32940">MDVIIDKNSGYCFGVEFAIQMAEDEMATGEPLFCLGDIVHNSMEVERLAKKGLKIIDREELKKLSDCKVLIRAHGEPPETYQLALENNIELVDASCPVVLKLQNRVKASFDAIDSKDGQIVIYGQEGHAEVIGIAGQTGDKAIVITTEKDLDKIDFEKPVTLYSQTTKSTQGFYKMKDLIEARVAEAGKNVDENFEYNDSICRQVSNREPQLRKFSKEFDVVIFVSGKKSSNGKALYGVCKQENERSYFVENETEIEPSWIRATDNVGICGATSTPMWLMEKVQNYIQAHSWN</sequence>
<keyword id="KW-0004">4Fe-4S</keyword>
<keyword id="KW-0408">Iron</keyword>
<keyword id="KW-0411">Iron-sulfur</keyword>
<keyword id="KW-0414">Isoprene biosynthesis</keyword>
<keyword id="KW-0479">Metal-binding</keyword>
<keyword id="KW-0560">Oxidoreductase</keyword>
<keyword id="KW-1185">Reference proteome</keyword>
<organism>
    <name type="scientific">Cytophaga hutchinsonii (strain ATCC 33406 / DSM 1761 / CIP 103989 / NBRC 15051 / NCIMB 9469 / D465)</name>
    <dbReference type="NCBI Taxonomy" id="269798"/>
    <lineage>
        <taxon>Bacteria</taxon>
        <taxon>Pseudomonadati</taxon>
        <taxon>Bacteroidota</taxon>
        <taxon>Cytophagia</taxon>
        <taxon>Cytophagales</taxon>
        <taxon>Cytophagaceae</taxon>
        <taxon>Cytophaga</taxon>
    </lineage>
</organism>
<feature type="chain" id="PRO_1000021110" description="4-hydroxy-3-methylbut-2-enyl diphosphate reductase">
    <location>
        <begin position="1"/>
        <end position="293"/>
    </location>
</feature>
<feature type="active site" description="Proton donor" evidence="1">
    <location>
        <position position="130"/>
    </location>
</feature>
<feature type="binding site" evidence="1">
    <location>
        <position position="12"/>
    </location>
    <ligand>
        <name>[4Fe-4S] cluster</name>
        <dbReference type="ChEBI" id="CHEBI:49883"/>
    </ligand>
</feature>
<feature type="binding site" evidence="1">
    <location>
        <position position="40"/>
    </location>
    <ligand>
        <name>(2E)-4-hydroxy-3-methylbut-2-enyl diphosphate</name>
        <dbReference type="ChEBI" id="CHEBI:128753"/>
    </ligand>
</feature>
<feature type="binding site" evidence="1">
    <location>
        <position position="40"/>
    </location>
    <ligand>
        <name>dimethylallyl diphosphate</name>
        <dbReference type="ChEBI" id="CHEBI:57623"/>
    </ligand>
</feature>
<feature type="binding site" evidence="1">
    <location>
        <position position="40"/>
    </location>
    <ligand>
        <name>isopentenyl diphosphate</name>
        <dbReference type="ChEBI" id="CHEBI:128769"/>
    </ligand>
</feature>
<feature type="binding site" evidence="1">
    <location>
        <position position="74"/>
    </location>
    <ligand>
        <name>(2E)-4-hydroxy-3-methylbut-2-enyl diphosphate</name>
        <dbReference type="ChEBI" id="CHEBI:128753"/>
    </ligand>
</feature>
<feature type="binding site" evidence="1">
    <location>
        <position position="74"/>
    </location>
    <ligand>
        <name>dimethylallyl diphosphate</name>
        <dbReference type="ChEBI" id="CHEBI:57623"/>
    </ligand>
</feature>
<feature type="binding site" evidence="1">
    <location>
        <position position="74"/>
    </location>
    <ligand>
        <name>isopentenyl diphosphate</name>
        <dbReference type="ChEBI" id="CHEBI:128769"/>
    </ligand>
</feature>
<feature type="binding site" evidence="1">
    <location>
        <position position="96"/>
    </location>
    <ligand>
        <name>[4Fe-4S] cluster</name>
        <dbReference type="ChEBI" id="CHEBI:49883"/>
    </ligand>
</feature>
<feature type="binding site" evidence="1">
    <location>
        <position position="128"/>
    </location>
    <ligand>
        <name>(2E)-4-hydroxy-3-methylbut-2-enyl diphosphate</name>
        <dbReference type="ChEBI" id="CHEBI:128753"/>
    </ligand>
</feature>
<feature type="binding site" evidence="1">
    <location>
        <position position="128"/>
    </location>
    <ligand>
        <name>dimethylallyl diphosphate</name>
        <dbReference type="ChEBI" id="CHEBI:57623"/>
    </ligand>
</feature>
<feature type="binding site" evidence="1">
    <location>
        <position position="128"/>
    </location>
    <ligand>
        <name>isopentenyl diphosphate</name>
        <dbReference type="ChEBI" id="CHEBI:128769"/>
    </ligand>
</feature>
<feature type="binding site" evidence="1">
    <location>
        <position position="166"/>
    </location>
    <ligand>
        <name>(2E)-4-hydroxy-3-methylbut-2-enyl diphosphate</name>
        <dbReference type="ChEBI" id="CHEBI:128753"/>
    </ligand>
</feature>
<feature type="binding site" evidence="1">
    <location>
        <position position="202"/>
    </location>
    <ligand>
        <name>[4Fe-4S] cluster</name>
        <dbReference type="ChEBI" id="CHEBI:49883"/>
    </ligand>
</feature>
<feature type="binding site" evidence="1">
    <location>
        <position position="230"/>
    </location>
    <ligand>
        <name>(2E)-4-hydroxy-3-methylbut-2-enyl diphosphate</name>
        <dbReference type="ChEBI" id="CHEBI:128753"/>
    </ligand>
</feature>
<feature type="binding site" evidence="1">
    <location>
        <position position="230"/>
    </location>
    <ligand>
        <name>dimethylallyl diphosphate</name>
        <dbReference type="ChEBI" id="CHEBI:57623"/>
    </ligand>
</feature>
<feature type="binding site" evidence="1">
    <location>
        <position position="230"/>
    </location>
    <ligand>
        <name>isopentenyl diphosphate</name>
        <dbReference type="ChEBI" id="CHEBI:128769"/>
    </ligand>
</feature>
<feature type="binding site" evidence="1">
    <location>
        <position position="231"/>
    </location>
    <ligand>
        <name>(2E)-4-hydroxy-3-methylbut-2-enyl diphosphate</name>
        <dbReference type="ChEBI" id="CHEBI:128753"/>
    </ligand>
</feature>
<feature type="binding site" evidence="1">
    <location>
        <position position="231"/>
    </location>
    <ligand>
        <name>dimethylallyl diphosphate</name>
        <dbReference type="ChEBI" id="CHEBI:57623"/>
    </ligand>
</feature>
<feature type="binding site" evidence="1">
    <location>
        <position position="231"/>
    </location>
    <ligand>
        <name>isopentenyl diphosphate</name>
        <dbReference type="ChEBI" id="CHEBI:128769"/>
    </ligand>
</feature>
<feature type="binding site" evidence="1">
    <location>
        <position position="232"/>
    </location>
    <ligand>
        <name>(2E)-4-hydroxy-3-methylbut-2-enyl diphosphate</name>
        <dbReference type="ChEBI" id="CHEBI:128753"/>
    </ligand>
</feature>
<feature type="binding site" evidence="1">
    <location>
        <position position="232"/>
    </location>
    <ligand>
        <name>dimethylallyl diphosphate</name>
        <dbReference type="ChEBI" id="CHEBI:57623"/>
    </ligand>
</feature>
<feature type="binding site" evidence="1">
    <location>
        <position position="232"/>
    </location>
    <ligand>
        <name>isopentenyl diphosphate</name>
        <dbReference type="ChEBI" id="CHEBI:128769"/>
    </ligand>
</feature>
<feature type="binding site" evidence="1">
    <location>
        <position position="274"/>
    </location>
    <ligand>
        <name>(2E)-4-hydroxy-3-methylbut-2-enyl diphosphate</name>
        <dbReference type="ChEBI" id="CHEBI:128753"/>
    </ligand>
</feature>
<feature type="binding site" evidence="1">
    <location>
        <position position="274"/>
    </location>
    <ligand>
        <name>dimethylallyl diphosphate</name>
        <dbReference type="ChEBI" id="CHEBI:57623"/>
    </ligand>
</feature>
<feature type="binding site" evidence="1">
    <location>
        <position position="274"/>
    </location>
    <ligand>
        <name>isopentenyl diphosphate</name>
        <dbReference type="ChEBI" id="CHEBI:128769"/>
    </ligand>
</feature>
<name>ISPH_CYTH3</name>
<dbReference type="EC" id="1.17.7.4" evidence="1"/>
<dbReference type="EMBL" id="CP000383">
    <property type="protein sequence ID" value="ABG57381.1"/>
    <property type="molecule type" value="Genomic_DNA"/>
</dbReference>
<dbReference type="RefSeq" id="WP_011583497.1">
    <property type="nucleotide sequence ID" value="NC_008255.1"/>
</dbReference>
<dbReference type="SMR" id="Q11YY5"/>
<dbReference type="STRING" id="269798.CHU_0087"/>
<dbReference type="DNASU" id="4185996"/>
<dbReference type="KEGG" id="chu:CHU_0087"/>
<dbReference type="eggNOG" id="COG0761">
    <property type="taxonomic scope" value="Bacteria"/>
</dbReference>
<dbReference type="HOGENOM" id="CLU_027486_0_1_10"/>
<dbReference type="OrthoDB" id="9777362at2"/>
<dbReference type="UniPathway" id="UPA00056">
    <property type="reaction ID" value="UER00097"/>
</dbReference>
<dbReference type="UniPathway" id="UPA00059">
    <property type="reaction ID" value="UER00105"/>
</dbReference>
<dbReference type="Proteomes" id="UP000001822">
    <property type="component" value="Chromosome"/>
</dbReference>
<dbReference type="GO" id="GO:0051539">
    <property type="term" value="F:4 iron, 4 sulfur cluster binding"/>
    <property type="evidence" value="ECO:0007669"/>
    <property type="project" value="UniProtKB-UniRule"/>
</dbReference>
<dbReference type="GO" id="GO:0051745">
    <property type="term" value="F:4-hydroxy-3-methylbut-2-enyl diphosphate reductase activity"/>
    <property type="evidence" value="ECO:0007669"/>
    <property type="project" value="UniProtKB-UniRule"/>
</dbReference>
<dbReference type="GO" id="GO:0046872">
    <property type="term" value="F:metal ion binding"/>
    <property type="evidence" value="ECO:0007669"/>
    <property type="project" value="UniProtKB-KW"/>
</dbReference>
<dbReference type="GO" id="GO:0050992">
    <property type="term" value="P:dimethylallyl diphosphate biosynthetic process"/>
    <property type="evidence" value="ECO:0007669"/>
    <property type="project" value="UniProtKB-UniRule"/>
</dbReference>
<dbReference type="GO" id="GO:0019288">
    <property type="term" value="P:isopentenyl diphosphate biosynthetic process, methylerythritol 4-phosphate pathway"/>
    <property type="evidence" value="ECO:0007669"/>
    <property type="project" value="UniProtKB-UniRule"/>
</dbReference>
<dbReference type="GO" id="GO:0016114">
    <property type="term" value="P:terpenoid biosynthetic process"/>
    <property type="evidence" value="ECO:0007669"/>
    <property type="project" value="UniProtKB-UniRule"/>
</dbReference>
<dbReference type="CDD" id="cd13944">
    <property type="entry name" value="lytB_ispH"/>
    <property type="match status" value="1"/>
</dbReference>
<dbReference type="Gene3D" id="3.40.50.11270">
    <property type="match status" value="1"/>
</dbReference>
<dbReference type="Gene3D" id="3.40.1010.20">
    <property type="entry name" value="4-hydroxy-3-methylbut-2-enyl diphosphate reductase, catalytic domain"/>
    <property type="match status" value="2"/>
</dbReference>
<dbReference type="HAMAP" id="MF_00191">
    <property type="entry name" value="IspH"/>
    <property type="match status" value="1"/>
</dbReference>
<dbReference type="InterPro" id="IPR003451">
    <property type="entry name" value="LytB/IspH"/>
</dbReference>
<dbReference type="NCBIfam" id="TIGR00216">
    <property type="entry name" value="ispH_lytB"/>
    <property type="match status" value="1"/>
</dbReference>
<dbReference type="NCBIfam" id="NF002187">
    <property type="entry name" value="PRK01045.1-1"/>
    <property type="match status" value="1"/>
</dbReference>
<dbReference type="PANTHER" id="PTHR30426">
    <property type="entry name" value="4-HYDROXY-3-METHYLBUT-2-ENYL DIPHOSPHATE REDUCTASE"/>
    <property type="match status" value="1"/>
</dbReference>
<dbReference type="PANTHER" id="PTHR30426:SF0">
    <property type="entry name" value="4-HYDROXY-3-METHYLBUT-2-ENYL DIPHOSPHATE REDUCTASE"/>
    <property type="match status" value="1"/>
</dbReference>
<dbReference type="Pfam" id="PF02401">
    <property type="entry name" value="LYTB"/>
    <property type="match status" value="1"/>
</dbReference>
<protein>
    <recommendedName>
        <fullName evidence="1">4-hydroxy-3-methylbut-2-enyl diphosphate reductase</fullName>
        <shortName evidence="1">HMBPP reductase</shortName>
        <ecNumber evidence="1">1.17.7.4</ecNumber>
    </recommendedName>
</protein>